<protein>
    <recommendedName>
        <fullName>Prostaglandin reductase-3</fullName>
        <shortName>PTGR-3</shortName>
        <ecNumber evidence="1">1.3.1.48</ecNumber>
    </recommendedName>
    <alternativeName>
        <fullName>15-oxoprostaglandin 13-reductase</fullName>
    </alternativeName>
    <alternativeName>
        <fullName>Zinc-binding alcohol dehydrogenase domain-containing protein 2</fullName>
    </alternativeName>
</protein>
<keyword id="KW-0007">Acetylation</keyword>
<keyword id="KW-0443">Lipid metabolism</keyword>
<keyword id="KW-0521">NADP</keyword>
<keyword id="KW-0560">Oxidoreductase</keyword>
<keyword id="KW-0576">Peroxisome</keyword>
<keyword id="KW-0597">Phosphoprotein</keyword>
<keyword id="KW-1185">Reference proteome</keyword>
<dbReference type="EC" id="1.3.1.48" evidence="1"/>
<dbReference type="EMBL" id="BC114032">
    <property type="protein sequence ID" value="AAI14033.1"/>
    <property type="molecule type" value="mRNA"/>
</dbReference>
<dbReference type="RefSeq" id="NP_001069432.1">
    <property type="nucleotide sequence ID" value="NM_001075964.1"/>
</dbReference>
<dbReference type="SMR" id="Q24K16"/>
<dbReference type="FunCoup" id="Q24K16">
    <property type="interactions" value="1391"/>
</dbReference>
<dbReference type="STRING" id="9913.ENSBTAP00000002256"/>
<dbReference type="PaxDb" id="9913-ENSBTAP00000002256"/>
<dbReference type="PeptideAtlas" id="Q24K16"/>
<dbReference type="Ensembl" id="ENSBTAT00000002256.7">
    <property type="protein sequence ID" value="ENSBTAP00000002256.7"/>
    <property type="gene ID" value="ENSBTAG00000001724.7"/>
</dbReference>
<dbReference type="GeneID" id="532505"/>
<dbReference type="KEGG" id="bta:532505"/>
<dbReference type="CTD" id="284273"/>
<dbReference type="VGNC" id="VGNC:37049">
    <property type="gene designation" value="PTGR3"/>
</dbReference>
<dbReference type="eggNOG" id="KOG1196">
    <property type="taxonomic scope" value="Eukaryota"/>
</dbReference>
<dbReference type="GeneTree" id="ENSGT00920000149172"/>
<dbReference type="HOGENOM" id="CLU_026673_3_1_1"/>
<dbReference type="InParanoid" id="Q24K16"/>
<dbReference type="OrthoDB" id="9992527at2759"/>
<dbReference type="Proteomes" id="UP000009136">
    <property type="component" value="Chromosome 24"/>
</dbReference>
<dbReference type="GO" id="GO:0005777">
    <property type="term" value="C:peroxisome"/>
    <property type="evidence" value="ECO:0000250"/>
    <property type="project" value="UniProtKB"/>
</dbReference>
<dbReference type="GO" id="GO:0047522">
    <property type="term" value="F:15-oxoprostaglandin 13-oxidase [NAD(P)+] activity"/>
    <property type="evidence" value="ECO:0000250"/>
    <property type="project" value="UniProtKB"/>
</dbReference>
<dbReference type="GO" id="GO:0008270">
    <property type="term" value="F:zinc ion binding"/>
    <property type="evidence" value="ECO:0007669"/>
    <property type="project" value="InterPro"/>
</dbReference>
<dbReference type="GO" id="GO:0006629">
    <property type="term" value="P:lipid metabolic process"/>
    <property type="evidence" value="ECO:0007669"/>
    <property type="project" value="UniProtKB-KW"/>
</dbReference>
<dbReference type="GO" id="GO:0045599">
    <property type="term" value="P:negative regulation of fat cell differentiation"/>
    <property type="evidence" value="ECO:0000250"/>
    <property type="project" value="UniProtKB"/>
</dbReference>
<dbReference type="CDD" id="cd08250">
    <property type="entry name" value="Mgc45594_like"/>
    <property type="match status" value="1"/>
</dbReference>
<dbReference type="FunFam" id="3.40.50.720:FF:000121">
    <property type="entry name" value="Prostaglandin reductase 2"/>
    <property type="match status" value="1"/>
</dbReference>
<dbReference type="FunFam" id="3.90.180.10:FF:000023">
    <property type="entry name" value="Prostaglandin reductase 3 isoform 1"/>
    <property type="match status" value="1"/>
</dbReference>
<dbReference type="Gene3D" id="3.90.180.10">
    <property type="entry name" value="Medium-chain alcohol dehydrogenases, catalytic domain"/>
    <property type="match status" value="1"/>
</dbReference>
<dbReference type="Gene3D" id="3.40.50.720">
    <property type="entry name" value="NAD(P)-binding Rossmann-like Domain"/>
    <property type="match status" value="1"/>
</dbReference>
<dbReference type="InterPro" id="IPR013149">
    <property type="entry name" value="ADH-like_C"/>
</dbReference>
<dbReference type="InterPro" id="IPR013154">
    <property type="entry name" value="ADH-like_N"/>
</dbReference>
<dbReference type="InterPro" id="IPR011032">
    <property type="entry name" value="GroES-like_sf"/>
</dbReference>
<dbReference type="InterPro" id="IPR036291">
    <property type="entry name" value="NAD(P)-bd_dom_sf"/>
</dbReference>
<dbReference type="InterPro" id="IPR020843">
    <property type="entry name" value="PKS_ER"/>
</dbReference>
<dbReference type="InterPro" id="IPR002364">
    <property type="entry name" value="Quin_OxRdtase/zeta-crystal_CS"/>
</dbReference>
<dbReference type="InterPro" id="IPR051397">
    <property type="entry name" value="Zn-ADH-like_protein"/>
</dbReference>
<dbReference type="PANTHER" id="PTHR43677:SF3">
    <property type="entry name" value="PROSTAGLANDIN REDUCTASE 3"/>
    <property type="match status" value="1"/>
</dbReference>
<dbReference type="PANTHER" id="PTHR43677">
    <property type="entry name" value="SHORT-CHAIN DEHYDROGENASE/REDUCTASE"/>
    <property type="match status" value="1"/>
</dbReference>
<dbReference type="Pfam" id="PF08240">
    <property type="entry name" value="ADH_N"/>
    <property type="match status" value="1"/>
</dbReference>
<dbReference type="Pfam" id="PF00107">
    <property type="entry name" value="ADH_zinc_N"/>
    <property type="match status" value="1"/>
</dbReference>
<dbReference type="SMART" id="SM00829">
    <property type="entry name" value="PKS_ER"/>
    <property type="match status" value="1"/>
</dbReference>
<dbReference type="SUPFAM" id="SSF50129">
    <property type="entry name" value="GroES-like"/>
    <property type="match status" value="1"/>
</dbReference>
<dbReference type="SUPFAM" id="SSF51735">
    <property type="entry name" value="NAD(P)-binding Rossmann-fold domains"/>
    <property type="match status" value="1"/>
</dbReference>
<dbReference type="PROSITE" id="PS01162">
    <property type="entry name" value="QOR_ZETA_CRYSTAL"/>
    <property type="match status" value="1"/>
</dbReference>
<gene>
    <name type="primary">PTGR3</name>
    <name type="synonym">ZADH2</name>
</gene>
<organism>
    <name type="scientific">Bos taurus</name>
    <name type="common">Bovine</name>
    <dbReference type="NCBI Taxonomy" id="9913"/>
    <lineage>
        <taxon>Eukaryota</taxon>
        <taxon>Metazoa</taxon>
        <taxon>Chordata</taxon>
        <taxon>Craniata</taxon>
        <taxon>Vertebrata</taxon>
        <taxon>Euteleostomi</taxon>
        <taxon>Mammalia</taxon>
        <taxon>Eutheria</taxon>
        <taxon>Laurasiatheria</taxon>
        <taxon>Artiodactyla</taxon>
        <taxon>Ruminantia</taxon>
        <taxon>Pecora</taxon>
        <taxon>Bovidae</taxon>
        <taxon>Bovinae</taxon>
        <taxon>Bos</taxon>
    </lineage>
</organism>
<evidence type="ECO:0000250" key="1">
    <source>
        <dbReference type="UniProtKB" id="Q8BGC4"/>
    </source>
</evidence>
<evidence type="ECO:0000250" key="2">
    <source>
        <dbReference type="UniProtKB" id="Q8N4Q0"/>
    </source>
</evidence>
<evidence type="ECO:0000305" key="3"/>
<reference key="1">
    <citation type="submission" date="2006-02" db="EMBL/GenBank/DDBJ databases">
        <authorList>
            <consortium name="NIH - Mammalian Gene Collection (MGC) project"/>
        </authorList>
    </citation>
    <scope>NUCLEOTIDE SEQUENCE [LARGE SCALE MRNA]</scope>
    <source>
        <strain>Hereford</strain>
        <tissue>Testis</tissue>
    </source>
</reference>
<name>PTGR3_BOVIN</name>
<comment type="function">
    <text evidence="1">Functions as 15-oxo-prostaglandin 13-reductase and acts on 15-keto-PGE1, 15-keto-PGE2, 15-keto-PGE1-alpha and 15-keto-PGE2-alpha with highest efficiency towards 15-keto-PGE2-alpha. Overexpression represses transcriptional activity of PPARG and inhibits adipocyte differentiation.</text>
</comment>
<comment type="catalytic activity">
    <reaction evidence="1">
        <text>13,14-dihydro-15-oxo-prostaglandin E2 + NADP(+) = 15-oxoprostaglandin E2 + NADPH + H(+)</text>
        <dbReference type="Rhea" id="RHEA:11912"/>
        <dbReference type="ChEBI" id="CHEBI:15378"/>
        <dbReference type="ChEBI" id="CHEBI:57400"/>
        <dbReference type="ChEBI" id="CHEBI:57402"/>
        <dbReference type="ChEBI" id="CHEBI:57783"/>
        <dbReference type="ChEBI" id="CHEBI:58349"/>
        <dbReference type="EC" id="1.3.1.48"/>
    </reaction>
</comment>
<comment type="catalytic activity">
    <reaction evidence="1">
        <text>13,14-dihydro-15-oxo-prostaglandin E1 + NADP(+) = 15-oxoprostaglandin E1 + NADPH + H(+)</text>
        <dbReference type="Rhea" id="RHEA:50584"/>
        <dbReference type="ChEBI" id="CHEBI:15378"/>
        <dbReference type="ChEBI" id="CHEBI:57401"/>
        <dbReference type="ChEBI" id="CHEBI:57783"/>
        <dbReference type="ChEBI" id="CHEBI:58349"/>
        <dbReference type="ChEBI" id="CHEBI:133408"/>
    </reaction>
</comment>
<comment type="catalytic activity">
    <reaction evidence="1">
        <text>13,14-dihydro-15-oxo-PGF2alpha + NADP(+) = 15-oxoprostaglandin F2alpha + NADPH + H(+)</text>
        <dbReference type="Rhea" id="RHEA:50588"/>
        <dbReference type="ChEBI" id="CHEBI:15378"/>
        <dbReference type="ChEBI" id="CHEBI:57783"/>
        <dbReference type="ChEBI" id="CHEBI:58349"/>
        <dbReference type="ChEBI" id="CHEBI:133374"/>
        <dbReference type="ChEBI" id="CHEBI:133409"/>
    </reaction>
</comment>
<comment type="catalytic activity">
    <reaction evidence="1">
        <text>13,14-dihydro-15-oxo-prostaglandin F1alpha + NADP(+) = 15-oxoprostaglandin F1alpha + NADPH + H(+)</text>
        <dbReference type="Rhea" id="RHEA:50592"/>
        <dbReference type="ChEBI" id="CHEBI:15378"/>
        <dbReference type="ChEBI" id="CHEBI:57783"/>
        <dbReference type="ChEBI" id="CHEBI:58349"/>
        <dbReference type="ChEBI" id="CHEBI:79072"/>
        <dbReference type="ChEBI" id="CHEBI:133411"/>
    </reaction>
</comment>
<comment type="subcellular location">
    <subcellularLocation>
        <location evidence="1">Peroxisome</location>
    </subcellularLocation>
</comment>
<comment type="similarity">
    <text evidence="3">Belongs to the zinc-containing alcohol dehydrogenase family. Quinone oxidoreductase subfamily.</text>
</comment>
<proteinExistence type="evidence at transcript level"/>
<feature type="chain" id="PRO_0000278847" description="Prostaglandin reductase-3">
    <location>
        <begin position="1"/>
        <end position="377"/>
    </location>
</feature>
<feature type="binding site" evidence="2">
    <location>
        <position position="185"/>
    </location>
    <ligand>
        <name>NADP(+)</name>
        <dbReference type="ChEBI" id="CHEBI:58349"/>
    </ligand>
</feature>
<feature type="binding site" evidence="2">
    <location>
        <position position="205"/>
    </location>
    <ligand>
        <name>NADP(+)</name>
        <dbReference type="ChEBI" id="CHEBI:58349"/>
    </ligand>
</feature>
<feature type="binding site" evidence="2">
    <location>
        <position position="209"/>
    </location>
    <ligand>
        <name>NADP(+)</name>
        <dbReference type="ChEBI" id="CHEBI:58349"/>
    </ligand>
</feature>
<feature type="binding site" evidence="2">
    <location>
        <position position="224"/>
    </location>
    <ligand>
        <name>NADP(+)</name>
        <dbReference type="ChEBI" id="CHEBI:58349"/>
    </ligand>
</feature>
<feature type="binding site" evidence="2">
    <location>
        <position position="247"/>
    </location>
    <ligand>
        <name>NADP(+)</name>
        <dbReference type="ChEBI" id="CHEBI:58349"/>
    </ligand>
</feature>
<feature type="binding site" evidence="2">
    <location>
        <position position="269"/>
    </location>
    <ligand>
        <name>NADP(+)</name>
        <dbReference type="ChEBI" id="CHEBI:58349"/>
    </ligand>
</feature>
<feature type="binding site" evidence="2">
    <location>
        <position position="275"/>
    </location>
    <ligand>
        <name>NADP(+)</name>
        <dbReference type="ChEBI" id="CHEBI:58349"/>
    </ligand>
</feature>
<feature type="binding site" evidence="2">
    <location>
        <begin position="303"/>
        <end position="305"/>
    </location>
    <ligand>
        <name>NADP(+)</name>
        <dbReference type="ChEBI" id="CHEBI:58349"/>
    </ligand>
</feature>
<feature type="binding site" evidence="2">
    <location>
        <position position="361"/>
    </location>
    <ligand>
        <name>NADP(+)</name>
        <dbReference type="ChEBI" id="CHEBI:58349"/>
    </ligand>
</feature>
<feature type="modified residue" description="N6-acetyllysine" evidence="1">
    <location>
        <position position="35"/>
    </location>
</feature>
<feature type="modified residue" description="Phosphoserine" evidence="2">
    <location>
        <position position="299"/>
    </location>
</feature>
<accession>Q24K16</accession>
<sequence length="377" mass="40119">MQRLALAGTRAIVDMSYARHFLDFQGSAIPSKMQKLVVTRLSPNFREAVTLRRDCPVPLPGDGDLLVRNRFVGVNASDINYSAGRYDPSVKTPFDAGFEGVGEVVALGLSASAAFMVGQAVAYMAPGSFAEYTVVPARVAIPVPGLKPEYLTLLVSGTTAYISLKELGGLSEGKKVLVTAAAGGTGQFAVQLAKKAKCHVIGTCSSAEKSAFLKSVGCDRPINYNTEHVGTVLRQEYPQGVDVVYESVGGAMFDLAVDALATRGRLIVIGFVSGYQTPTGLSPVKAGTLPAKLLKKSASVQGFFLNHYLPEFRGAMDHLLKMYAGGELVCEVDTGGLSAEGRFTGLESVFRAVDYMYMRKNTGKIVVELPPSVNSKL</sequence>